<name>TDA11_YEASZ</name>
<comment type="subcellular location">
    <subcellularLocation>
        <location evidence="1">Cytoplasm</location>
    </subcellularLocation>
</comment>
<comment type="similarity">
    <text evidence="5">Belongs to the TDA11 family.</text>
</comment>
<feature type="chain" id="PRO_0000410769" description="Topoisomerase I damage affected protein 11">
    <location>
        <begin position="1"/>
        <end position="499"/>
    </location>
</feature>
<feature type="region of interest" description="Disordered" evidence="4">
    <location>
        <begin position="32"/>
        <end position="62"/>
    </location>
</feature>
<feature type="region of interest" description="Disordered" evidence="4">
    <location>
        <begin position="252"/>
        <end position="306"/>
    </location>
</feature>
<feature type="region of interest" description="Disordered" evidence="4">
    <location>
        <begin position="332"/>
        <end position="377"/>
    </location>
</feature>
<feature type="region of interest" description="Disordered" evidence="4">
    <location>
        <begin position="400"/>
        <end position="499"/>
    </location>
</feature>
<feature type="coiled-coil region" evidence="3">
    <location>
        <begin position="179"/>
        <end position="231"/>
    </location>
</feature>
<feature type="compositionally biased region" description="Polar residues" evidence="4">
    <location>
        <begin position="257"/>
        <end position="287"/>
    </location>
</feature>
<feature type="compositionally biased region" description="Basic and acidic residues" evidence="4">
    <location>
        <begin position="290"/>
        <end position="301"/>
    </location>
</feature>
<feature type="compositionally biased region" description="Polar residues" evidence="4">
    <location>
        <begin position="332"/>
        <end position="359"/>
    </location>
</feature>
<feature type="compositionally biased region" description="Polar residues" evidence="4">
    <location>
        <begin position="368"/>
        <end position="377"/>
    </location>
</feature>
<feature type="compositionally biased region" description="Basic and acidic residues" evidence="4">
    <location>
        <begin position="403"/>
        <end position="421"/>
    </location>
</feature>
<feature type="compositionally biased region" description="Basic residues" evidence="4">
    <location>
        <begin position="470"/>
        <end position="479"/>
    </location>
</feature>
<feature type="modified residue" description="Phosphothreonine" evidence="2">
    <location>
        <position position="236"/>
    </location>
</feature>
<feature type="modified residue" description="Phosphoserine" evidence="2">
    <location>
        <position position="244"/>
    </location>
</feature>
<feature type="modified residue" description="Phosphoserine" evidence="2">
    <location>
        <position position="286"/>
    </location>
</feature>
<reference key="1">
    <citation type="journal article" date="2011" name="PLoS Genet.">
        <title>Whole-genome comparison reveals novel genetic elements that characterize the genome of industrial strains of Saccharomyces cerevisiae.</title>
        <authorList>
            <person name="Borneman A.R."/>
            <person name="Desany B.A."/>
            <person name="Riches D."/>
            <person name="Affourtit J.P."/>
            <person name="Forgan A.H."/>
            <person name="Pretorius I.S."/>
            <person name="Egholm M."/>
            <person name="Chambers P.J."/>
        </authorList>
    </citation>
    <scope>NUCLEOTIDE SEQUENCE [LARGE SCALE GENOMIC DNA]</scope>
    <source>
        <strain>Zymaflore VL3</strain>
    </source>
</reference>
<keyword id="KW-0175">Coiled coil</keyword>
<keyword id="KW-0963">Cytoplasm</keyword>
<keyword id="KW-0597">Phosphoprotein</keyword>
<sequence length="499" mass="55718">MNKFDEFIESNEKDLDVDTSTRNSIISMSPVRKTGRKIRSASSNGYRLEHHRTSSAGSMHSQRLMTPTRLNDQDHPLQAKPDARRVVTRHSSVSVPNAMSKRRSLIQPMVVPTTPESQNNLPSVSHSEGSYGIPLESTTVLSSEQAMASGLRRSRNGSSQSVNSMIATTIPTNGVDVSALLQSLATKELELLECKQKIEDLKKQTQHEEQNYTRRARELHELKEQVSKHLDPSLNTPVKNRAFSPVYQNIPLESRTENAGNSSLPSSVSKPKNMGHQSTNQSRSVSPQDIQERRQRDDSSDSSKQSLWSKPLALFNQFDKIIQHEIERTLNWDDSLSGTPEVQEGTPTSNSESSAQQYDNEAPGARQKSPSQGSVSRSLWSFVSDVKAGLLGIEEENDNDVITDNRCDPVYKSDRQHEQKKSTHKITNRGQAEDSGDDSSLNMRKFKTTTKFQKDNAGNNSLTDESGHRTREKKSKRSSNKLSFIGEPDNDNSSVQKLS</sequence>
<accession>E7QFR8</accession>
<gene>
    <name type="primary">TDA11</name>
    <name type="ORF">VL3_2214</name>
</gene>
<dbReference type="EMBL" id="AEJS01000036">
    <property type="protein sequence ID" value="EGA86534.1"/>
    <property type="molecule type" value="Genomic_DNA"/>
</dbReference>
<dbReference type="SMR" id="E7QFR8"/>
<dbReference type="HOGENOM" id="CLU_046807_0_0_1"/>
<dbReference type="OrthoDB" id="4036304at2759"/>
<dbReference type="GO" id="GO:0005737">
    <property type="term" value="C:cytoplasm"/>
    <property type="evidence" value="ECO:0007669"/>
    <property type="project" value="UniProtKB-SubCell"/>
</dbReference>
<dbReference type="InterPro" id="IPR031388">
    <property type="entry name" value="Tda11"/>
</dbReference>
<dbReference type="Pfam" id="PF17084">
    <property type="entry name" value="TDA11"/>
    <property type="match status" value="1"/>
</dbReference>
<protein>
    <recommendedName>
        <fullName>Topoisomerase I damage affected protein 11</fullName>
    </recommendedName>
</protein>
<evidence type="ECO:0000250" key="1"/>
<evidence type="ECO:0000250" key="2">
    <source>
        <dbReference type="UniProtKB" id="P38854"/>
    </source>
</evidence>
<evidence type="ECO:0000255" key="3"/>
<evidence type="ECO:0000256" key="4">
    <source>
        <dbReference type="SAM" id="MobiDB-lite"/>
    </source>
</evidence>
<evidence type="ECO:0000305" key="5"/>
<organism>
    <name type="scientific">Saccharomyces cerevisiae (strain Zymaflore VL3)</name>
    <name type="common">Baker's yeast</name>
    <dbReference type="NCBI Taxonomy" id="764100"/>
    <lineage>
        <taxon>Eukaryota</taxon>
        <taxon>Fungi</taxon>
        <taxon>Dikarya</taxon>
        <taxon>Ascomycota</taxon>
        <taxon>Saccharomycotina</taxon>
        <taxon>Saccharomycetes</taxon>
        <taxon>Saccharomycetales</taxon>
        <taxon>Saccharomycetaceae</taxon>
        <taxon>Saccharomyces</taxon>
    </lineage>
</organism>
<proteinExistence type="inferred from homology"/>